<comment type="function">
    <text evidence="1">Catalyzes the conversion of uracil and 5-phospho-alpha-D-ribose 1-diphosphate (PRPP) to UMP and diphosphate.</text>
</comment>
<comment type="catalytic activity">
    <reaction evidence="1">
        <text>UMP + diphosphate = 5-phospho-alpha-D-ribose 1-diphosphate + uracil</text>
        <dbReference type="Rhea" id="RHEA:13017"/>
        <dbReference type="ChEBI" id="CHEBI:17568"/>
        <dbReference type="ChEBI" id="CHEBI:33019"/>
        <dbReference type="ChEBI" id="CHEBI:57865"/>
        <dbReference type="ChEBI" id="CHEBI:58017"/>
        <dbReference type="EC" id="2.4.2.9"/>
    </reaction>
</comment>
<comment type="cofactor">
    <cofactor evidence="1">
        <name>Mg(2+)</name>
        <dbReference type="ChEBI" id="CHEBI:18420"/>
    </cofactor>
    <text evidence="1">Binds 1 Mg(2+) ion per subunit. The magnesium is bound as Mg-PRPP.</text>
</comment>
<comment type="activity regulation">
    <text evidence="1">Allosterically activated by GTP.</text>
</comment>
<comment type="pathway">
    <text evidence="1">Pyrimidine metabolism; UMP biosynthesis via salvage pathway; UMP from uracil: step 1/1.</text>
</comment>
<comment type="similarity">
    <text evidence="1">Belongs to the UPRTase family.</text>
</comment>
<reference key="1">
    <citation type="submission" date="2006-03" db="EMBL/GenBank/DDBJ databases">
        <title>Complete sequence of Shewanella denitrificans OS217.</title>
        <authorList>
            <consortium name="US DOE Joint Genome Institute"/>
            <person name="Copeland A."/>
            <person name="Lucas S."/>
            <person name="Lapidus A."/>
            <person name="Barry K."/>
            <person name="Detter J.C."/>
            <person name="Glavina del Rio T."/>
            <person name="Hammon N."/>
            <person name="Israni S."/>
            <person name="Dalin E."/>
            <person name="Tice H."/>
            <person name="Pitluck S."/>
            <person name="Brettin T."/>
            <person name="Bruce D."/>
            <person name="Han C."/>
            <person name="Tapia R."/>
            <person name="Gilna P."/>
            <person name="Kiss H."/>
            <person name="Schmutz J."/>
            <person name="Larimer F."/>
            <person name="Land M."/>
            <person name="Hauser L."/>
            <person name="Kyrpides N."/>
            <person name="Lykidis A."/>
            <person name="Richardson P."/>
        </authorList>
    </citation>
    <scope>NUCLEOTIDE SEQUENCE [LARGE SCALE GENOMIC DNA]</scope>
    <source>
        <strain>OS217 / ATCC BAA-1090 / DSM 15013</strain>
    </source>
</reference>
<keyword id="KW-0021">Allosteric enzyme</keyword>
<keyword id="KW-0328">Glycosyltransferase</keyword>
<keyword id="KW-0342">GTP-binding</keyword>
<keyword id="KW-0460">Magnesium</keyword>
<keyword id="KW-0547">Nucleotide-binding</keyword>
<keyword id="KW-1185">Reference proteome</keyword>
<keyword id="KW-0808">Transferase</keyword>
<accession>Q12MF1</accession>
<gene>
    <name evidence="1" type="primary">upp</name>
    <name type="ordered locus">Sden_2093</name>
</gene>
<protein>
    <recommendedName>
        <fullName evidence="1">Uracil phosphoribosyltransferase</fullName>
        <ecNumber evidence="1">2.4.2.9</ecNumber>
    </recommendedName>
    <alternativeName>
        <fullName evidence="1">UMP pyrophosphorylase</fullName>
    </alternativeName>
    <alternativeName>
        <fullName evidence="1">UPRTase</fullName>
    </alternativeName>
</protein>
<organism>
    <name type="scientific">Shewanella denitrificans (strain OS217 / ATCC BAA-1090 / DSM 15013)</name>
    <dbReference type="NCBI Taxonomy" id="318161"/>
    <lineage>
        <taxon>Bacteria</taxon>
        <taxon>Pseudomonadati</taxon>
        <taxon>Pseudomonadota</taxon>
        <taxon>Gammaproteobacteria</taxon>
        <taxon>Alteromonadales</taxon>
        <taxon>Shewanellaceae</taxon>
        <taxon>Shewanella</taxon>
    </lineage>
</organism>
<evidence type="ECO:0000255" key="1">
    <source>
        <dbReference type="HAMAP-Rule" id="MF_01218"/>
    </source>
</evidence>
<dbReference type="EC" id="2.4.2.9" evidence="1"/>
<dbReference type="EMBL" id="CP000302">
    <property type="protein sequence ID" value="ABE55375.1"/>
    <property type="molecule type" value="Genomic_DNA"/>
</dbReference>
<dbReference type="RefSeq" id="WP_011496530.1">
    <property type="nucleotide sequence ID" value="NC_007954.1"/>
</dbReference>
<dbReference type="SMR" id="Q12MF1"/>
<dbReference type="STRING" id="318161.Sden_2093"/>
<dbReference type="KEGG" id="sdn:Sden_2093"/>
<dbReference type="eggNOG" id="COG0035">
    <property type="taxonomic scope" value="Bacteria"/>
</dbReference>
<dbReference type="HOGENOM" id="CLU_067096_2_2_6"/>
<dbReference type="OrthoDB" id="9781675at2"/>
<dbReference type="UniPathway" id="UPA00574">
    <property type="reaction ID" value="UER00636"/>
</dbReference>
<dbReference type="Proteomes" id="UP000001982">
    <property type="component" value="Chromosome"/>
</dbReference>
<dbReference type="GO" id="GO:0005525">
    <property type="term" value="F:GTP binding"/>
    <property type="evidence" value="ECO:0007669"/>
    <property type="project" value="UniProtKB-KW"/>
</dbReference>
<dbReference type="GO" id="GO:0000287">
    <property type="term" value="F:magnesium ion binding"/>
    <property type="evidence" value="ECO:0007669"/>
    <property type="project" value="UniProtKB-UniRule"/>
</dbReference>
<dbReference type="GO" id="GO:0004845">
    <property type="term" value="F:uracil phosphoribosyltransferase activity"/>
    <property type="evidence" value="ECO:0007669"/>
    <property type="project" value="UniProtKB-UniRule"/>
</dbReference>
<dbReference type="GO" id="GO:0044206">
    <property type="term" value="P:UMP salvage"/>
    <property type="evidence" value="ECO:0007669"/>
    <property type="project" value="UniProtKB-UniRule"/>
</dbReference>
<dbReference type="GO" id="GO:0006223">
    <property type="term" value="P:uracil salvage"/>
    <property type="evidence" value="ECO:0007669"/>
    <property type="project" value="InterPro"/>
</dbReference>
<dbReference type="CDD" id="cd06223">
    <property type="entry name" value="PRTases_typeI"/>
    <property type="match status" value="1"/>
</dbReference>
<dbReference type="FunFam" id="3.40.50.2020:FF:000003">
    <property type="entry name" value="Uracil phosphoribosyltransferase"/>
    <property type="match status" value="1"/>
</dbReference>
<dbReference type="Gene3D" id="3.40.50.2020">
    <property type="match status" value="1"/>
</dbReference>
<dbReference type="HAMAP" id="MF_01218_B">
    <property type="entry name" value="Upp_B"/>
    <property type="match status" value="1"/>
</dbReference>
<dbReference type="InterPro" id="IPR000836">
    <property type="entry name" value="PRibTrfase_dom"/>
</dbReference>
<dbReference type="InterPro" id="IPR029057">
    <property type="entry name" value="PRTase-like"/>
</dbReference>
<dbReference type="InterPro" id="IPR034332">
    <property type="entry name" value="Upp_B"/>
</dbReference>
<dbReference type="InterPro" id="IPR050054">
    <property type="entry name" value="UPRTase/APRTase"/>
</dbReference>
<dbReference type="InterPro" id="IPR005765">
    <property type="entry name" value="Ura_phspho_trans"/>
</dbReference>
<dbReference type="NCBIfam" id="NF001097">
    <property type="entry name" value="PRK00129.1"/>
    <property type="match status" value="1"/>
</dbReference>
<dbReference type="NCBIfam" id="TIGR01091">
    <property type="entry name" value="upp"/>
    <property type="match status" value="1"/>
</dbReference>
<dbReference type="PANTHER" id="PTHR32315">
    <property type="entry name" value="ADENINE PHOSPHORIBOSYLTRANSFERASE"/>
    <property type="match status" value="1"/>
</dbReference>
<dbReference type="PANTHER" id="PTHR32315:SF4">
    <property type="entry name" value="URACIL PHOSPHORIBOSYLTRANSFERASE, CHLOROPLASTIC"/>
    <property type="match status" value="1"/>
</dbReference>
<dbReference type="Pfam" id="PF14681">
    <property type="entry name" value="UPRTase"/>
    <property type="match status" value="1"/>
</dbReference>
<dbReference type="SUPFAM" id="SSF53271">
    <property type="entry name" value="PRTase-like"/>
    <property type="match status" value="1"/>
</dbReference>
<name>UPP_SHEDO</name>
<proteinExistence type="inferred from homology"/>
<feature type="chain" id="PRO_1000053779" description="Uracil phosphoribosyltransferase">
    <location>
        <begin position="1"/>
        <end position="208"/>
    </location>
</feature>
<feature type="binding site" evidence="1">
    <location>
        <position position="78"/>
    </location>
    <ligand>
        <name>5-phospho-alpha-D-ribose 1-diphosphate</name>
        <dbReference type="ChEBI" id="CHEBI:58017"/>
    </ligand>
</feature>
<feature type="binding site" evidence="1">
    <location>
        <position position="103"/>
    </location>
    <ligand>
        <name>5-phospho-alpha-D-ribose 1-diphosphate</name>
        <dbReference type="ChEBI" id="CHEBI:58017"/>
    </ligand>
</feature>
<feature type="binding site" evidence="1">
    <location>
        <begin position="130"/>
        <end position="138"/>
    </location>
    <ligand>
        <name>5-phospho-alpha-D-ribose 1-diphosphate</name>
        <dbReference type="ChEBI" id="CHEBI:58017"/>
    </ligand>
</feature>
<feature type="binding site" evidence="1">
    <location>
        <position position="193"/>
    </location>
    <ligand>
        <name>uracil</name>
        <dbReference type="ChEBI" id="CHEBI:17568"/>
    </ligand>
</feature>
<feature type="binding site" evidence="1">
    <location>
        <begin position="198"/>
        <end position="200"/>
    </location>
    <ligand>
        <name>uracil</name>
        <dbReference type="ChEBI" id="CHEBI:17568"/>
    </ligand>
</feature>
<feature type="binding site" evidence="1">
    <location>
        <position position="199"/>
    </location>
    <ligand>
        <name>5-phospho-alpha-D-ribose 1-diphosphate</name>
        <dbReference type="ChEBI" id="CHEBI:58017"/>
    </ligand>
</feature>
<sequence length="208" mass="22614">MKVVEVKHPLIRHKVGLMREADISTKRFRELATEVGSLLTYEATSDFETEKVTIEGWNGPVEIDQIKGKKVTVVPILRAGLGMMDGVLEHIPSARISVVGIYRDEETLEPVPYFEKIVSNVEERIALVVDPMLATGGSMIATIDLLKSKGCTSIKALVLVAAPEGIAALEKAHPDIELYTASIDKCLNEQGYILPGLGDAGDKIFGTK</sequence>